<evidence type="ECO:0000255" key="1">
    <source>
        <dbReference type="HAMAP-Rule" id="MF_00418"/>
    </source>
</evidence>
<evidence type="ECO:0000305" key="2"/>
<accession>Q16BK4</accession>
<proteinExistence type="inferred from homology"/>
<sequence length="291" mass="30743">MFKGSMPALVTPFRNGELDLETLKKLVEWHIGEGSNGLVPVGTTGESPTLTHKEHEVVVEEVVKAAAGRVPVIAGAGSNNTLEAIRLVRHAEAVGADAALVVTPYYNKPTQSGLIAHFTALHDCADLPIIIYNIPGRSVVDMSPETMGKLAELPRIIGVKDATGDLARVCDQRSTCGPDFMQLSGEDATAHGFNAQGGVGCISVTANVAPKLLSQMQAACLAGDYATALSIQDRLMPLHKAIFIEPGLVGVKYAMSQLDLCSEEVRLPLTALSDETRALVDAGLRHAGLMN</sequence>
<organism>
    <name type="scientific">Roseobacter denitrificans (strain ATCC 33942 / OCh 114)</name>
    <name type="common">Erythrobacter sp. (strain OCh 114)</name>
    <name type="synonym">Roseobacter denitrificans</name>
    <dbReference type="NCBI Taxonomy" id="375451"/>
    <lineage>
        <taxon>Bacteria</taxon>
        <taxon>Pseudomonadati</taxon>
        <taxon>Pseudomonadota</taxon>
        <taxon>Alphaproteobacteria</taxon>
        <taxon>Rhodobacterales</taxon>
        <taxon>Roseobacteraceae</taxon>
        <taxon>Roseobacter</taxon>
    </lineage>
</organism>
<protein>
    <recommendedName>
        <fullName evidence="1">4-hydroxy-tetrahydrodipicolinate synthase</fullName>
        <shortName evidence="1">HTPA synthase</shortName>
        <ecNumber evidence="1">4.3.3.7</ecNumber>
    </recommendedName>
</protein>
<comment type="function">
    <text evidence="1">Catalyzes the condensation of (S)-aspartate-beta-semialdehyde [(S)-ASA] and pyruvate to 4-hydroxy-tetrahydrodipicolinate (HTPA).</text>
</comment>
<comment type="catalytic activity">
    <reaction evidence="1">
        <text>L-aspartate 4-semialdehyde + pyruvate = (2S,4S)-4-hydroxy-2,3,4,5-tetrahydrodipicolinate + H2O + H(+)</text>
        <dbReference type="Rhea" id="RHEA:34171"/>
        <dbReference type="ChEBI" id="CHEBI:15361"/>
        <dbReference type="ChEBI" id="CHEBI:15377"/>
        <dbReference type="ChEBI" id="CHEBI:15378"/>
        <dbReference type="ChEBI" id="CHEBI:67139"/>
        <dbReference type="ChEBI" id="CHEBI:537519"/>
        <dbReference type="EC" id="4.3.3.7"/>
    </reaction>
</comment>
<comment type="pathway">
    <text evidence="1">Amino-acid biosynthesis; L-lysine biosynthesis via DAP pathway; (S)-tetrahydrodipicolinate from L-aspartate: step 3/4.</text>
</comment>
<comment type="subunit">
    <text evidence="1">Homotetramer; dimer of dimers.</text>
</comment>
<comment type="subcellular location">
    <subcellularLocation>
        <location evidence="1">Cytoplasm</location>
    </subcellularLocation>
</comment>
<comment type="similarity">
    <text evidence="1">Belongs to the DapA family.</text>
</comment>
<comment type="caution">
    <text evidence="2">Was originally thought to be a dihydrodipicolinate synthase (DHDPS), catalyzing the condensation of (S)-aspartate-beta-semialdehyde [(S)-ASA] and pyruvate to dihydrodipicolinate (DHDP). However, it was shown in E.coli that the product of the enzymatic reaction is not dihydrodipicolinate but in fact (4S)-4-hydroxy-2,3,4,5-tetrahydro-(2S)-dipicolinic acid (HTPA), and that the consecutive dehydration reaction leading to DHDP is not spontaneous but catalyzed by DapB.</text>
</comment>
<gene>
    <name evidence="1" type="primary">dapA</name>
    <name type="ordered locus">RD1_0972</name>
</gene>
<feature type="chain" id="PRO_1000050259" description="4-hydroxy-tetrahydrodipicolinate synthase">
    <location>
        <begin position="1"/>
        <end position="291"/>
    </location>
</feature>
<feature type="active site" description="Proton donor/acceptor" evidence="1">
    <location>
        <position position="132"/>
    </location>
</feature>
<feature type="active site" description="Schiff-base intermediate with substrate" evidence="1">
    <location>
        <position position="160"/>
    </location>
</feature>
<feature type="binding site" evidence="1">
    <location>
        <position position="44"/>
    </location>
    <ligand>
        <name>pyruvate</name>
        <dbReference type="ChEBI" id="CHEBI:15361"/>
    </ligand>
</feature>
<feature type="binding site" evidence="1">
    <location>
        <position position="202"/>
    </location>
    <ligand>
        <name>pyruvate</name>
        <dbReference type="ChEBI" id="CHEBI:15361"/>
    </ligand>
</feature>
<feature type="site" description="Part of a proton relay during catalysis" evidence="1">
    <location>
        <position position="43"/>
    </location>
</feature>
<feature type="site" description="Part of a proton relay during catalysis" evidence="1">
    <location>
        <position position="106"/>
    </location>
</feature>
<name>DAPA_ROSDO</name>
<dbReference type="EC" id="4.3.3.7" evidence="1"/>
<dbReference type="EMBL" id="CP000362">
    <property type="protein sequence ID" value="ABG30639.1"/>
    <property type="molecule type" value="Genomic_DNA"/>
</dbReference>
<dbReference type="RefSeq" id="WP_011567261.1">
    <property type="nucleotide sequence ID" value="NC_008209.1"/>
</dbReference>
<dbReference type="SMR" id="Q16BK4"/>
<dbReference type="STRING" id="375451.RD1_0972"/>
<dbReference type="KEGG" id="rde:RD1_0972"/>
<dbReference type="eggNOG" id="COG0329">
    <property type="taxonomic scope" value="Bacteria"/>
</dbReference>
<dbReference type="HOGENOM" id="CLU_049343_7_1_5"/>
<dbReference type="OrthoDB" id="9782828at2"/>
<dbReference type="UniPathway" id="UPA00034">
    <property type="reaction ID" value="UER00017"/>
</dbReference>
<dbReference type="Proteomes" id="UP000007029">
    <property type="component" value="Chromosome"/>
</dbReference>
<dbReference type="GO" id="GO:0005829">
    <property type="term" value="C:cytosol"/>
    <property type="evidence" value="ECO:0007669"/>
    <property type="project" value="TreeGrafter"/>
</dbReference>
<dbReference type="GO" id="GO:0008840">
    <property type="term" value="F:4-hydroxy-tetrahydrodipicolinate synthase activity"/>
    <property type="evidence" value="ECO:0007669"/>
    <property type="project" value="UniProtKB-UniRule"/>
</dbReference>
<dbReference type="GO" id="GO:0019877">
    <property type="term" value="P:diaminopimelate biosynthetic process"/>
    <property type="evidence" value="ECO:0007669"/>
    <property type="project" value="UniProtKB-UniRule"/>
</dbReference>
<dbReference type="GO" id="GO:0009089">
    <property type="term" value="P:lysine biosynthetic process via diaminopimelate"/>
    <property type="evidence" value="ECO:0007669"/>
    <property type="project" value="UniProtKB-UniRule"/>
</dbReference>
<dbReference type="CDD" id="cd00950">
    <property type="entry name" value="DHDPS"/>
    <property type="match status" value="1"/>
</dbReference>
<dbReference type="Gene3D" id="3.20.20.70">
    <property type="entry name" value="Aldolase class I"/>
    <property type="match status" value="1"/>
</dbReference>
<dbReference type="HAMAP" id="MF_00418">
    <property type="entry name" value="DapA"/>
    <property type="match status" value="1"/>
</dbReference>
<dbReference type="InterPro" id="IPR013785">
    <property type="entry name" value="Aldolase_TIM"/>
</dbReference>
<dbReference type="InterPro" id="IPR005263">
    <property type="entry name" value="DapA"/>
</dbReference>
<dbReference type="InterPro" id="IPR002220">
    <property type="entry name" value="DapA-like"/>
</dbReference>
<dbReference type="InterPro" id="IPR020625">
    <property type="entry name" value="Schiff_base-form_aldolases_AS"/>
</dbReference>
<dbReference type="InterPro" id="IPR020624">
    <property type="entry name" value="Schiff_base-form_aldolases_CS"/>
</dbReference>
<dbReference type="NCBIfam" id="TIGR00674">
    <property type="entry name" value="dapA"/>
    <property type="match status" value="1"/>
</dbReference>
<dbReference type="PANTHER" id="PTHR12128:SF66">
    <property type="entry name" value="4-HYDROXY-2-OXOGLUTARATE ALDOLASE, MITOCHONDRIAL"/>
    <property type="match status" value="1"/>
</dbReference>
<dbReference type="PANTHER" id="PTHR12128">
    <property type="entry name" value="DIHYDRODIPICOLINATE SYNTHASE"/>
    <property type="match status" value="1"/>
</dbReference>
<dbReference type="Pfam" id="PF00701">
    <property type="entry name" value="DHDPS"/>
    <property type="match status" value="1"/>
</dbReference>
<dbReference type="PIRSF" id="PIRSF001365">
    <property type="entry name" value="DHDPS"/>
    <property type="match status" value="1"/>
</dbReference>
<dbReference type="PRINTS" id="PR00146">
    <property type="entry name" value="DHPICSNTHASE"/>
</dbReference>
<dbReference type="SMART" id="SM01130">
    <property type="entry name" value="DHDPS"/>
    <property type="match status" value="1"/>
</dbReference>
<dbReference type="SUPFAM" id="SSF51569">
    <property type="entry name" value="Aldolase"/>
    <property type="match status" value="1"/>
</dbReference>
<dbReference type="PROSITE" id="PS00665">
    <property type="entry name" value="DHDPS_1"/>
    <property type="match status" value="1"/>
</dbReference>
<dbReference type="PROSITE" id="PS00666">
    <property type="entry name" value="DHDPS_2"/>
    <property type="match status" value="1"/>
</dbReference>
<keyword id="KW-0028">Amino-acid biosynthesis</keyword>
<keyword id="KW-0963">Cytoplasm</keyword>
<keyword id="KW-0220">Diaminopimelate biosynthesis</keyword>
<keyword id="KW-0456">Lyase</keyword>
<keyword id="KW-0457">Lysine biosynthesis</keyword>
<keyword id="KW-1185">Reference proteome</keyword>
<keyword id="KW-0704">Schiff base</keyword>
<reference key="1">
    <citation type="journal article" date="2007" name="J. Bacteriol.">
        <title>The complete genome sequence of Roseobacter denitrificans reveals a mixotrophic rather than photosynthetic metabolism.</title>
        <authorList>
            <person name="Swingley W.D."/>
            <person name="Sadekar S."/>
            <person name="Mastrian S.D."/>
            <person name="Matthies H.J."/>
            <person name="Hao J."/>
            <person name="Ramos H."/>
            <person name="Acharya C.R."/>
            <person name="Conrad A.L."/>
            <person name="Taylor H.L."/>
            <person name="Dejesa L.C."/>
            <person name="Shah M.K."/>
            <person name="O'Huallachain M.E."/>
            <person name="Lince M.T."/>
            <person name="Blankenship R.E."/>
            <person name="Beatty J.T."/>
            <person name="Touchman J.W."/>
        </authorList>
    </citation>
    <scope>NUCLEOTIDE SEQUENCE [LARGE SCALE GENOMIC DNA]</scope>
    <source>
        <strain>ATCC 33942 / OCh 114</strain>
    </source>
</reference>